<gene>
    <name type="primary">Strip1</name>
    <name type="synonym">Fam40a</name>
    <name type="synonym">Kiaa1761</name>
</gene>
<organism>
    <name type="scientific">Mus musculus</name>
    <name type="common">Mouse</name>
    <dbReference type="NCBI Taxonomy" id="10090"/>
    <lineage>
        <taxon>Eukaryota</taxon>
        <taxon>Metazoa</taxon>
        <taxon>Chordata</taxon>
        <taxon>Craniata</taxon>
        <taxon>Vertebrata</taxon>
        <taxon>Euteleostomi</taxon>
        <taxon>Mammalia</taxon>
        <taxon>Eutheria</taxon>
        <taxon>Euarchontoglires</taxon>
        <taxon>Glires</taxon>
        <taxon>Rodentia</taxon>
        <taxon>Myomorpha</taxon>
        <taxon>Muroidea</taxon>
        <taxon>Muridae</taxon>
        <taxon>Murinae</taxon>
        <taxon>Mus</taxon>
        <taxon>Mus</taxon>
    </lineage>
</organism>
<comment type="function">
    <text evidence="2 4">Plays a role in the regulation of cell morphology and cytoskeletal organization. Required in the cortical actin filament dynamics and cell shape (By similarity). Part of the striatin-interacting phosphatase and kinase (STRIPAK) complexes. STRIPAK complexes have critical roles in protein (de)phosphorylation and are regulators of multiple signaling pathways including Hippo, MAPK, nuclear receptor and cytoskeleton remodeling. Different types of STRIPAK complexes are involved in a variety of biological processes such as cell growth, differentiation, apoptosis, metabolism and immune regulation (PubMed:18782753).</text>
</comment>
<comment type="subunit">
    <text evidence="2 4">Part of the core of STRIPAK complexes composed of PP2A catalytic and scaffolding subunits, the striatins (PP2A regulatory subunits), the striatin-associated proteins MOB4, STRIP1 and STRIP2, PDCD10 and members of the STE20 kinases, such as STK24 and STK26 (PubMed:18782753). The STRIPAK complex can be extended by adapter proteins such as SLMAP:SIKE1, CTTNBP2 or CTTNBP2NL. Interacts with CDC42BPB. Interacts with CTTNBP2NL.</text>
</comment>
<comment type="subcellular location">
    <subcellularLocation>
        <location evidence="1">Cytoplasm</location>
    </subcellularLocation>
    <text evidence="1">Enriched on the plasma membrane.</text>
</comment>
<comment type="alternative products">
    <event type="alternative splicing"/>
    <isoform>
        <id>Q8C079-1</id>
        <name>1</name>
        <sequence type="displayed"/>
    </isoform>
    <isoform>
        <id>Q8C079-2</id>
        <name>2</name>
        <sequence type="described" ref="VSP_014865"/>
    </isoform>
    <isoform>
        <id>Q8C079-3</id>
        <name>3</name>
        <sequence type="described" ref="VSP_014866"/>
    </isoform>
    <isoform>
        <id>Q8C079-4</id>
        <name>4</name>
        <sequence type="described" ref="VSP_014863"/>
    </isoform>
</comment>
<comment type="similarity">
    <text evidence="8">Belongs to the STRIP family.</text>
</comment>
<comment type="sequence caution" evidence="8">
    <molecule>Isoform 2</molecule>
    <conflict type="frameshift">
        <sequence resource="EMBL-CDS" id="BAC29206"/>
    </conflict>
</comment>
<accession>Q8C079</accession>
<accession>Q80T92</accession>
<accession>Q8BZC6</accession>
<accession>Q8CIF7</accession>
<keyword id="KW-0007">Acetylation</keyword>
<keyword id="KW-0025">Alternative splicing</keyword>
<keyword id="KW-0963">Cytoplasm</keyword>
<keyword id="KW-0597">Phosphoprotein</keyword>
<keyword id="KW-1185">Reference proteome</keyword>
<name>STRP1_MOUSE</name>
<feature type="chain" id="PRO_0000187019" description="Striatin-interacting protein 1">
    <location>
        <begin position="1"/>
        <end position="837"/>
    </location>
</feature>
<feature type="region of interest" description="Disordered" evidence="3">
    <location>
        <begin position="1"/>
        <end position="67"/>
    </location>
</feature>
<feature type="region of interest" description="Disordered" evidence="3">
    <location>
        <begin position="333"/>
        <end position="423"/>
    </location>
</feature>
<feature type="region of interest" description="Required for STRIPAK core complex formation" evidence="2">
    <location>
        <begin position="796"/>
        <end position="837"/>
    </location>
</feature>
<feature type="compositionally biased region" description="Pro residues" evidence="3">
    <location>
        <begin position="18"/>
        <end position="35"/>
    </location>
</feature>
<feature type="compositionally biased region" description="Basic and acidic residues" evidence="3">
    <location>
        <begin position="47"/>
        <end position="60"/>
    </location>
</feature>
<feature type="compositionally biased region" description="Basic and acidic residues" evidence="3">
    <location>
        <begin position="356"/>
        <end position="377"/>
    </location>
</feature>
<feature type="compositionally biased region" description="Acidic residues" evidence="3">
    <location>
        <begin position="378"/>
        <end position="391"/>
    </location>
</feature>
<feature type="modified residue" description="N-acetylmethionine" evidence="2">
    <location>
        <position position="1"/>
    </location>
</feature>
<feature type="modified residue" description="Phosphoserine" evidence="2">
    <location>
        <position position="59"/>
    </location>
</feature>
<feature type="modified residue" description="Phosphoserine" evidence="9 10 11 12">
    <location>
        <position position="335"/>
    </location>
</feature>
<feature type="modified residue" description="Phosphoserine" evidence="12">
    <location>
        <position position="339"/>
    </location>
</feature>
<feature type="modified residue" description="Phosphoserine" evidence="2">
    <location>
        <position position="788"/>
    </location>
</feature>
<feature type="splice variant" id="VSP_014863" description="In isoform 4." evidence="6">
    <location>
        <begin position="1"/>
        <end position="126"/>
    </location>
</feature>
<feature type="splice variant" id="VSP_014865" description="In isoform 2." evidence="7">
    <location>
        <begin position="430"/>
        <end position="837"/>
    </location>
</feature>
<feature type="splice variant" id="VSP_014866" description="In isoform 3." evidence="5">
    <location>
        <begin position="555"/>
        <end position="629"/>
    </location>
</feature>
<feature type="sequence conflict" description="In Ref. 1; BAC27678." evidence="8" ref="1">
    <original>D</original>
    <variation>A</variation>
    <location>
        <position position="104"/>
    </location>
</feature>
<feature type="sequence conflict" description="In Ref. 1; BAC27678." evidence="8" ref="1">
    <original>Q</original>
    <variation>H</variation>
    <location>
        <position position="347"/>
    </location>
</feature>
<proteinExistence type="evidence at protein level"/>
<protein>
    <recommendedName>
        <fullName>Striatin-interacting protein 1</fullName>
    </recommendedName>
    <alternativeName>
        <fullName>Protein FAM40A</fullName>
    </alternativeName>
</protein>
<dbReference type="EMBL" id="AK032065">
    <property type="protein sequence ID" value="BAC27678.1"/>
    <property type="molecule type" value="mRNA"/>
</dbReference>
<dbReference type="EMBL" id="AK035833">
    <property type="protein sequence ID" value="BAC29206.1"/>
    <property type="status" value="ALT_FRAME"/>
    <property type="molecule type" value="mRNA"/>
</dbReference>
<dbReference type="EMBL" id="BC023952">
    <property type="protein sequence ID" value="AAH23952.1"/>
    <property type="molecule type" value="mRNA"/>
</dbReference>
<dbReference type="EMBL" id="AK122553">
    <property type="protein sequence ID" value="BAC65835.1"/>
    <property type="molecule type" value="Unassigned_RNA"/>
</dbReference>
<dbReference type="CCDS" id="CCDS51043.1">
    <molecule id="Q8C079-1"/>
</dbReference>
<dbReference type="RefSeq" id="NP_705791.2">
    <molecule id="Q8C079-1"/>
    <property type="nucleotide sequence ID" value="NM_153563.3"/>
</dbReference>
<dbReference type="SMR" id="Q8C079"/>
<dbReference type="BioGRID" id="230890">
    <property type="interactions" value="16"/>
</dbReference>
<dbReference type="CORUM" id="Q8C079"/>
<dbReference type="FunCoup" id="Q8C079">
    <property type="interactions" value="4973"/>
</dbReference>
<dbReference type="IntAct" id="Q8C079">
    <property type="interactions" value="16"/>
</dbReference>
<dbReference type="MINT" id="Q8C079"/>
<dbReference type="STRING" id="10090.ENSMUSP00000068587"/>
<dbReference type="iPTMnet" id="Q8C079"/>
<dbReference type="PhosphoSitePlus" id="Q8C079"/>
<dbReference type="jPOST" id="Q8C079"/>
<dbReference type="PaxDb" id="10090-ENSMUSP00000068587"/>
<dbReference type="PeptideAtlas" id="Q8C079"/>
<dbReference type="ProteomicsDB" id="254602">
    <molecule id="Q8C079-1"/>
</dbReference>
<dbReference type="ProteomicsDB" id="254603">
    <molecule id="Q8C079-2"/>
</dbReference>
<dbReference type="ProteomicsDB" id="254604">
    <molecule id="Q8C079-3"/>
</dbReference>
<dbReference type="ProteomicsDB" id="254605">
    <molecule id="Q8C079-4"/>
</dbReference>
<dbReference type="Pumba" id="Q8C079"/>
<dbReference type="Antibodypedia" id="53747">
    <property type="antibodies" value="178 antibodies from 21 providers"/>
</dbReference>
<dbReference type="Ensembl" id="ENSMUST00000064759.7">
    <molecule id="Q8C079-1"/>
    <property type="protein sequence ID" value="ENSMUSP00000068587.6"/>
    <property type="gene ID" value="ENSMUSG00000014601.14"/>
</dbReference>
<dbReference type="GeneID" id="229707"/>
<dbReference type="KEGG" id="mmu:229707"/>
<dbReference type="UCSC" id="uc008qxg.2">
    <molecule id="Q8C079-1"/>
    <property type="organism name" value="mouse"/>
</dbReference>
<dbReference type="AGR" id="MGI:2443884"/>
<dbReference type="CTD" id="85369"/>
<dbReference type="MGI" id="MGI:2443884">
    <property type="gene designation" value="Strip1"/>
</dbReference>
<dbReference type="VEuPathDB" id="HostDB:ENSMUSG00000014601"/>
<dbReference type="eggNOG" id="KOG3680">
    <property type="taxonomic scope" value="Eukaryota"/>
</dbReference>
<dbReference type="GeneTree" id="ENSGT00400000022095"/>
<dbReference type="HOGENOM" id="CLU_011008_1_0_1"/>
<dbReference type="InParanoid" id="Q8C079"/>
<dbReference type="OMA" id="KMTRAMR"/>
<dbReference type="OrthoDB" id="18234at2759"/>
<dbReference type="PhylomeDB" id="Q8C079"/>
<dbReference type="TreeFam" id="TF314205"/>
<dbReference type="BioGRID-ORCS" id="229707">
    <property type="hits" value="15 hits in 78 CRISPR screens"/>
</dbReference>
<dbReference type="ChiTaRS" id="Strip1">
    <property type="organism name" value="mouse"/>
</dbReference>
<dbReference type="PRO" id="PR:Q8C079"/>
<dbReference type="Proteomes" id="UP000000589">
    <property type="component" value="Chromosome 3"/>
</dbReference>
<dbReference type="RNAct" id="Q8C079">
    <property type="molecule type" value="protein"/>
</dbReference>
<dbReference type="Bgee" id="ENSMUSG00000014601">
    <property type="expression patterns" value="Expressed in ear vesicle and 233 other cell types or tissues"/>
</dbReference>
<dbReference type="GO" id="GO:0005829">
    <property type="term" value="C:cytosol"/>
    <property type="evidence" value="ECO:0007669"/>
    <property type="project" value="Ensembl"/>
</dbReference>
<dbReference type="GO" id="GO:0090443">
    <property type="term" value="C:FAR/SIN/STRIPAK complex"/>
    <property type="evidence" value="ECO:0000250"/>
    <property type="project" value="UniProtKB"/>
</dbReference>
<dbReference type="GO" id="GO:0005634">
    <property type="term" value="C:nucleus"/>
    <property type="evidence" value="ECO:0007669"/>
    <property type="project" value="Ensembl"/>
</dbReference>
<dbReference type="GO" id="GO:0019901">
    <property type="term" value="F:protein kinase binding"/>
    <property type="evidence" value="ECO:0000353"/>
    <property type="project" value="UniProtKB"/>
</dbReference>
<dbReference type="GO" id="GO:0030674">
    <property type="term" value="F:protein-macromolecule adaptor activity"/>
    <property type="evidence" value="ECO:0000250"/>
    <property type="project" value="UniProtKB"/>
</dbReference>
<dbReference type="GO" id="GO:0031267">
    <property type="term" value="F:small GTPase binding"/>
    <property type="evidence" value="ECO:0000353"/>
    <property type="project" value="UniProtKB"/>
</dbReference>
<dbReference type="GO" id="GO:0030866">
    <property type="term" value="P:cortical actin cytoskeleton organization"/>
    <property type="evidence" value="ECO:0000250"/>
    <property type="project" value="UniProtKB"/>
</dbReference>
<dbReference type="GO" id="GO:0035331">
    <property type="term" value="P:negative regulation of hippo signaling"/>
    <property type="evidence" value="ECO:0000250"/>
    <property type="project" value="UniProtKB"/>
</dbReference>
<dbReference type="GO" id="GO:0022604">
    <property type="term" value="P:regulation of cell morphogenesis"/>
    <property type="evidence" value="ECO:0000250"/>
    <property type="project" value="UniProtKB"/>
</dbReference>
<dbReference type="InterPro" id="IPR040185">
    <property type="entry name" value="Far11/STRP"/>
</dbReference>
<dbReference type="InterPro" id="IPR021819">
    <property type="entry name" value="Far11/STRP_C"/>
</dbReference>
<dbReference type="InterPro" id="IPR012486">
    <property type="entry name" value="Far11/STRP_N"/>
</dbReference>
<dbReference type="PANTHER" id="PTHR13239">
    <property type="entry name" value="PROTEIN REQUIRED FOR HYPHAL ANASTOMOSIS HAM-2"/>
    <property type="match status" value="1"/>
</dbReference>
<dbReference type="PANTHER" id="PTHR13239:SF7">
    <property type="entry name" value="STRIATIN-INTERACTING PROTEIN 1"/>
    <property type="match status" value="1"/>
</dbReference>
<dbReference type="Pfam" id="PF11882">
    <property type="entry name" value="DUF3402"/>
    <property type="match status" value="2"/>
</dbReference>
<dbReference type="Pfam" id="PF07923">
    <property type="entry name" value="N1221"/>
    <property type="match status" value="1"/>
</dbReference>
<dbReference type="SMART" id="SM01293">
    <property type="entry name" value="DUF3402"/>
    <property type="match status" value="1"/>
</dbReference>
<dbReference type="SMART" id="SM01292">
    <property type="entry name" value="N1221"/>
    <property type="match status" value="1"/>
</dbReference>
<reference key="1">
    <citation type="journal article" date="2005" name="Science">
        <title>The transcriptional landscape of the mammalian genome.</title>
        <authorList>
            <person name="Carninci P."/>
            <person name="Kasukawa T."/>
            <person name="Katayama S."/>
            <person name="Gough J."/>
            <person name="Frith M.C."/>
            <person name="Maeda N."/>
            <person name="Oyama R."/>
            <person name="Ravasi T."/>
            <person name="Lenhard B."/>
            <person name="Wells C."/>
            <person name="Kodzius R."/>
            <person name="Shimokawa K."/>
            <person name="Bajic V.B."/>
            <person name="Brenner S.E."/>
            <person name="Batalov S."/>
            <person name="Forrest A.R."/>
            <person name="Zavolan M."/>
            <person name="Davis M.J."/>
            <person name="Wilming L.G."/>
            <person name="Aidinis V."/>
            <person name="Allen J.E."/>
            <person name="Ambesi-Impiombato A."/>
            <person name="Apweiler R."/>
            <person name="Aturaliya R.N."/>
            <person name="Bailey T.L."/>
            <person name="Bansal M."/>
            <person name="Baxter L."/>
            <person name="Beisel K.W."/>
            <person name="Bersano T."/>
            <person name="Bono H."/>
            <person name="Chalk A.M."/>
            <person name="Chiu K.P."/>
            <person name="Choudhary V."/>
            <person name="Christoffels A."/>
            <person name="Clutterbuck D.R."/>
            <person name="Crowe M.L."/>
            <person name="Dalla E."/>
            <person name="Dalrymple B.P."/>
            <person name="de Bono B."/>
            <person name="Della Gatta G."/>
            <person name="di Bernardo D."/>
            <person name="Down T."/>
            <person name="Engstrom P."/>
            <person name="Fagiolini M."/>
            <person name="Faulkner G."/>
            <person name="Fletcher C.F."/>
            <person name="Fukushima T."/>
            <person name="Furuno M."/>
            <person name="Futaki S."/>
            <person name="Gariboldi M."/>
            <person name="Georgii-Hemming P."/>
            <person name="Gingeras T.R."/>
            <person name="Gojobori T."/>
            <person name="Green R.E."/>
            <person name="Gustincich S."/>
            <person name="Harbers M."/>
            <person name="Hayashi Y."/>
            <person name="Hensch T.K."/>
            <person name="Hirokawa N."/>
            <person name="Hill D."/>
            <person name="Huminiecki L."/>
            <person name="Iacono M."/>
            <person name="Ikeo K."/>
            <person name="Iwama A."/>
            <person name="Ishikawa T."/>
            <person name="Jakt M."/>
            <person name="Kanapin A."/>
            <person name="Katoh M."/>
            <person name="Kawasawa Y."/>
            <person name="Kelso J."/>
            <person name="Kitamura H."/>
            <person name="Kitano H."/>
            <person name="Kollias G."/>
            <person name="Krishnan S.P."/>
            <person name="Kruger A."/>
            <person name="Kummerfeld S.K."/>
            <person name="Kurochkin I.V."/>
            <person name="Lareau L.F."/>
            <person name="Lazarevic D."/>
            <person name="Lipovich L."/>
            <person name="Liu J."/>
            <person name="Liuni S."/>
            <person name="McWilliam S."/>
            <person name="Madan Babu M."/>
            <person name="Madera M."/>
            <person name="Marchionni L."/>
            <person name="Matsuda H."/>
            <person name="Matsuzawa S."/>
            <person name="Miki H."/>
            <person name="Mignone F."/>
            <person name="Miyake S."/>
            <person name="Morris K."/>
            <person name="Mottagui-Tabar S."/>
            <person name="Mulder N."/>
            <person name="Nakano N."/>
            <person name="Nakauchi H."/>
            <person name="Ng P."/>
            <person name="Nilsson R."/>
            <person name="Nishiguchi S."/>
            <person name="Nishikawa S."/>
            <person name="Nori F."/>
            <person name="Ohara O."/>
            <person name="Okazaki Y."/>
            <person name="Orlando V."/>
            <person name="Pang K.C."/>
            <person name="Pavan W.J."/>
            <person name="Pavesi G."/>
            <person name="Pesole G."/>
            <person name="Petrovsky N."/>
            <person name="Piazza S."/>
            <person name="Reed J."/>
            <person name="Reid J.F."/>
            <person name="Ring B.Z."/>
            <person name="Ringwald M."/>
            <person name="Rost B."/>
            <person name="Ruan Y."/>
            <person name="Salzberg S.L."/>
            <person name="Sandelin A."/>
            <person name="Schneider C."/>
            <person name="Schoenbach C."/>
            <person name="Sekiguchi K."/>
            <person name="Semple C.A."/>
            <person name="Seno S."/>
            <person name="Sessa L."/>
            <person name="Sheng Y."/>
            <person name="Shibata Y."/>
            <person name="Shimada H."/>
            <person name="Shimada K."/>
            <person name="Silva D."/>
            <person name="Sinclair B."/>
            <person name="Sperling S."/>
            <person name="Stupka E."/>
            <person name="Sugiura K."/>
            <person name="Sultana R."/>
            <person name="Takenaka Y."/>
            <person name="Taki K."/>
            <person name="Tammoja K."/>
            <person name="Tan S.L."/>
            <person name="Tang S."/>
            <person name="Taylor M.S."/>
            <person name="Tegner J."/>
            <person name="Teichmann S.A."/>
            <person name="Ueda H.R."/>
            <person name="van Nimwegen E."/>
            <person name="Verardo R."/>
            <person name="Wei C.L."/>
            <person name="Yagi K."/>
            <person name="Yamanishi H."/>
            <person name="Zabarovsky E."/>
            <person name="Zhu S."/>
            <person name="Zimmer A."/>
            <person name="Hide W."/>
            <person name="Bult C."/>
            <person name="Grimmond S.M."/>
            <person name="Teasdale R.D."/>
            <person name="Liu E.T."/>
            <person name="Brusic V."/>
            <person name="Quackenbush J."/>
            <person name="Wahlestedt C."/>
            <person name="Mattick J.S."/>
            <person name="Hume D.A."/>
            <person name="Kai C."/>
            <person name="Sasaki D."/>
            <person name="Tomaru Y."/>
            <person name="Fukuda S."/>
            <person name="Kanamori-Katayama M."/>
            <person name="Suzuki M."/>
            <person name="Aoki J."/>
            <person name="Arakawa T."/>
            <person name="Iida J."/>
            <person name="Imamura K."/>
            <person name="Itoh M."/>
            <person name="Kato T."/>
            <person name="Kawaji H."/>
            <person name="Kawagashira N."/>
            <person name="Kawashima T."/>
            <person name="Kojima M."/>
            <person name="Kondo S."/>
            <person name="Konno H."/>
            <person name="Nakano K."/>
            <person name="Ninomiya N."/>
            <person name="Nishio T."/>
            <person name="Okada M."/>
            <person name="Plessy C."/>
            <person name="Shibata K."/>
            <person name="Shiraki T."/>
            <person name="Suzuki S."/>
            <person name="Tagami M."/>
            <person name="Waki K."/>
            <person name="Watahiki A."/>
            <person name="Okamura-Oho Y."/>
            <person name="Suzuki H."/>
            <person name="Kawai J."/>
            <person name="Hayashizaki Y."/>
        </authorList>
    </citation>
    <scope>NUCLEOTIDE SEQUENCE [LARGE SCALE MRNA] (ISOFORMS 1 AND 2)</scope>
    <source>
        <strain>C57BL/6J</strain>
        <tissue>Medulla oblongata</tissue>
    </source>
</reference>
<reference key="2">
    <citation type="journal article" date="2004" name="Genome Res.">
        <title>The status, quality, and expansion of the NIH full-length cDNA project: the Mammalian Gene Collection (MGC).</title>
        <authorList>
            <consortium name="The MGC Project Team"/>
        </authorList>
    </citation>
    <scope>NUCLEOTIDE SEQUENCE [LARGE SCALE MRNA] (ISOFORM 4)</scope>
    <source>
        <strain>FVB/N</strain>
        <tissue>Mammary tumor</tissue>
    </source>
</reference>
<reference key="3">
    <citation type="journal article" date="2003" name="DNA Res.">
        <title>Prediction of the coding sequences of mouse homologues of KIAA gene: II. The complete nucleotide sequences of 400 mouse KIAA-homologous cDNAs identified by screening of terminal sequences of cDNA clones randomly sampled from size-fractionated libraries.</title>
        <authorList>
            <person name="Okazaki N."/>
            <person name="Kikuno R."/>
            <person name="Ohara R."/>
            <person name="Inamoto S."/>
            <person name="Aizawa H."/>
            <person name="Yuasa S."/>
            <person name="Nakajima D."/>
            <person name="Nagase T."/>
            <person name="Ohara O."/>
            <person name="Koga H."/>
        </authorList>
    </citation>
    <scope>NUCLEOTIDE SEQUENCE [LARGE SCALE MRNA] OF 3-837 (ISOFORM 3)</scope>
</reference>
<reference key="4">
    <citation type="journal article" date="2004" name="Mol. Cell. Proteomics">
        <title>Phosphoproteomic analysis of the developing mouse brain.</title>
        <authorList>
            <person name="Ballif B.A."/>
            <person name="Villen J."/>
            <person name="Beausoleil S.A."/>
            <person name="Schwartz D."/>
            <person name="Gygi S.P."/>
        </authorList>
    </citation>
    <scope>PHOSPHORYLATION [LARGE SCALE ANALYSIS] AT SER-335</scope>
    <scope>IDENTIFICATION BY MASS SPECTROMETRY [LARGE SCALE ANALYSIS]</scope>
    <source>
        <tissue>Embryonic brain</tissue>
    </source>
</reference>
<reference key="5">
    <citation type="journal article" date="2007" name="Mol. Cell. Proteomics">
        <title>Qualitative and quantitative analyses of protein phosphorylation in naive and stimulated mouse synaptosomal preparations.</title>
        <authorList>
            <person name="Munton R.P."/>
            <person name="Tweedie-Cullen R."/>
            <person name="Livingstone-Zatchej M."/>
            <person name="Weinandy F."/>
            <person name="Waidelich M."/>
            <person name="Longo D."/>
            <person name="Gehrig P."/>
            <person name="Potthast F."/>
            <person name="Rutishauser D."/>
            <person name="Gerrits B."/>
            <person name="Panse C."/>
            <person name="Schlapbach R."/>
            <person name="Mansuy I.M."/>
        </authorList>
    </citation>
    <scope>IDENTIFICATION BY MASS SPECTROMETRY [LARGE SCALE ANALYSIS]</scope>
    <source>
        <tissue>Brain cortex</tissue>
    </source>
</reference>
<reference key="6">
    <citation type="journal article" date="2009" name="Immunity">
        <title>The phagosomal proteome in interferon-gamma-activated macrophages.</title>
        <authorList>
            <person name="Trost M."/>
            <person name="English L."/>
            <person name="Lemieux S."/>
            <person name="Courcelles M."/>
            <person name="Desjardins M."/>
            <person name="Thibault P."/>
        </authorList>
    </citation>
    <scope>PHOSPHORYLATION [LARGE SCALE ANALYSIS] AT SER-335</scope>
    <scope>IDENTIFICATION BY MASS SPECTROMETRY [LARGE SCALE ANALYSIS]</scope>
</reference>
<reference key="7">
    <citation type="journal article" date="2009" name="Mol. Cell. Proteomics">
        <title>A PP2A phosphatase high density interaction network identifies a novel striatin-interacting phosphatase and kinase complex linked to the cerebral cavernous malformation 3 (CCM3) protein.</title>
        <authorList>
            <person name="Goudreault M."/>
            <person name="D'Ambrosio L.M."/>
            <person name="Kean M.J."/>
            <person name="Mullin M.J."/>
            <person name="Larsen B.G."/>
            <person name="Sanchez A."/>
            <person name="Chaudhry S."/>
            <person name="Chen G.I."/>
            <person name="Sicheri F."/>
            <person name="Nesvizhskii A.I."/>
            <person name="Aebersold R."/>
            <person name="Raught B."/>
            <person name="Gingras A.C."/>
        </authorList>
    </citation>
    <scope>IDENTIFICATION IN THE STRIATIN-INTERACTING PHOSPHATASE AND KINASE (STRIPAK) COMPLEX</scope>
    <scope>IDENTIFICATION BY MASS SPECTROMETRY</scope>
    <scope>FUNCTION</scope>
</reference>
<reference key="8">
    <citation type="journal article" date="2009" name="Mol. Cell. Proteomics">
        <title>Large scale localization of protein phosphorylation by use of electron capture dissociation mass spectrometry.</title>
        <authorList>
            <person name="Sweet S.M."/>
            <person name="Bailey C.M."/>
            <person name="Cunningham D.L."/>
            <person name="Heath J.K."/>
            <person name="Cooper H.J."/>
        </authorList>
    </citation>
    <scope>PHOSPHORYLATION [LARGE SCALE ANALYSIS] AT SER-335</scope>
    <scope>IDENTIFICATION BY MASS SPECTROMETRY [LARGE SCALE ANALYSIS]</scope>
    <source>
        <tissue>Embryonic fibroblast</tissue>
    </source>
</reference>
<reference key="9">
    <citation type="journal article" date="2010" name="Cell">
        <title>A tissue-specific atlas of mouse protein phosphorylation and expression.</title>
        <authorList>
            <person name="Huttlin E.L."/>
            <person name="Jedrychowski M.P."/>
            <person name="Elias J.E."/>
            <person name="Goswami T."/>
            <person name="Rad R."/>
            <person name="Beausoleil S.A."/>
            <person name="Villen J."/>
            <person name="Haas W."/>
            <person name="Sowa M.E."/>
            <person name="Gygi S.P."/>
        </authorList>
    </citation>
    <scope>PHOSPHORYLATION [LARGE SCALE ANALYSIS] AT SER-335 AND SER-339</scope>
    <scope>IDENTIFICATION BY MASS SPECTROMETRY [LARGE SCALE ANALYSIS]</scope>
    <source>
        <tissue>Brain</tissue>
        <tissue>Brown adipose tissue</tissue>
        <tissue>Heart</tissue>
        <tissue>Kidney</tissue>
        <tissue>Liver</tissue>
        <tissue>Lung</tissue>
        <tissue>Pancreas</tissue>
        <tissue>Spleen</tissue>
        <tissue>Testis</tissue>
    </source>
</reference>
<sequence length="837" mass="95585">MEPAAAGPGPLIVNNKQPQPPPPPPPATAQPPPGAPRAAGGLLPGGKAREFNRNQRKDSEGYSESPDLEFEYADTDKWAAELAELYSYTEGPEFLMNRKCFEEDFRIHVSDKKWTELDTNQHRTHAMRLLDGLEVTAREKRLKVARAILYVAQGTFGECSSEAEVQFWMRYNIFLLLEVGTFNALVELLNMEIDNSAACSSAVRKPAISLADSTDLRVLLNIMYLIVETVHQDCDGDKAEWRTMRQTFRAELGSPLYNNEPFAIMLFGMVTKFCSGHAPHFPMKKVLLLLWKTVLCTLGGFEELQSMKAEKRTLLGLPPLPEDSIKVIRNMRAASPPASASDLIEQQQKRGRREHKALIKQDNLDAFNERDPYKADDSREEEEENDDDSSLEGEAFPLERDEVMPPPLQHPQTDRLTCPKGLPWAPKVREKDIEMFLESSRSKFIGYTLGSDTNTVVGLPRPIHESIKTLKQHKYTSIAEVQAQMEEEYLRSPLSGGEEEVEQVPAETLYQGLLPSLPQYMIALLKILLAAAPTSKAKTDSINILADVLPEEMPTTVLQSMKLGVDVNRHKEVIVKAISAVLLLLLKHFKLNHIYQFEYMAQHLVFANCIPLILKFFNQNIMSYITAKNSISVLDYPHCVVNELPELTAESLEAGDNNQFCWRNLFSCINLLRILNKLTKWKHSRTMMLVVFKSAPILKRALKVKQAMMQLYVLKLLKVQTKYLGRQWRKSNMKTMSAIYQKVRHRLNDDWAYGNDLDARPWDFQAEECALRANIERFNARRYDRTHSNPDFLPVDNCLQSVLGQRVDLPEDFQMNYDLWLEREVFSKPISWEELLQ</sequence>
<evidence type="ECO:0000250" key="1"/>
<evidence type="ECO:0000250" key="2">
    <source>
        <dbReference type="UniProtKB" id="Q5VSL9"/>
    </source>
</evidence>
<evidence type="ECO:0000256" key="3">
    <source>
        <dbReference type="SAM" id="MobiDB-lite"/>
    </source>
</evidence>
<evidence type="ECO:0000269" key="4">
    <source>
    </source>
</evidence>
<evidence type="ECO:0000303" key="5">
    <source>
    </source>
</evidence>
<evidence type="ECO:0000303" key="6">
    <source>
    </source>
</evidence>
<evidence type="ECO:0000303" key="7">
    <source>
    </source>
</evidence>
<evidence type="ECO:0000305" key="8"/>
<evidence type="ECO:0007744" key="9">
    <source>
    </source>
</evidence>
<evidence type="ECO:0007744" key="10">
    <source>
    </source>
</evidence>
<evidence type="ECO:0007744" key="11">
    <source>
    </source>
</evidence>
<evidence type="ECO:0007744" key="12">
    <source>
    </source>
</evidence>